<sequence>MLKEYRTVKEVVGPLMLVDQVESVSFDELVEIELHNGEKRRGRVLEINKDKALVQLFEGSAGINIKGAKVKFLGKPLELGVSEDMLGRVFDGLGNPKDGGPKIIPDEKRDISGIPINPVARNYPDEFIQTGVSAIDGLNTLVRGQKLPVFSGSGLPHAELAAQIARQAKVLNSDSKFAVVFAAIGTTFEEAQYFIDDFTKTGAIDRAVLFINLANDPAIERIATPRMALTAAEYLAFEKGMHVLVIMTDITNYCEALREVSAARKEVPGRRGYPGYLYTDLSTIYERAGRILGKEGSITQIPILTMPEDDKTHPIPDLTGYITEGQIILSRELYKKGIMPPIDVLPSLSRLKDKGIGKEKTREDHADTMNQLFAAYAQGKQAKELSVILGESALSDTDKLYAKFADAFEGEYVSQGFTTNRTIEETLNLGWKLLTILPKSELKRIRDEYLEKYLNKAEESK</sequence>
<gene>
    <name evidence="1" type="primary">atpB</name>
    <name type="ordered locus">CLJ_B2854</name>
</gene>
<organism>
    <name type="scientific">Clostridium botulinum (strain 657 / Type Ba4)</name>
    <dbReference type="NCBI Taxonomy" id="515621"/>
    <lineage>
        <taxon>Bacteria</taxon>
        <taxon>Bacillati</taxon>
        <taxon>Bacillota</taxon>
        <taxon>Clostridia</taxon>
        <taxon>Eubacteriales</taxon>
        <taxon>Clostridiaceae</taxon>
        <taxon>Clostridium</taxon>
    </lineage>
</organism>
<evidence type="ECO:0000255" key="1">
    <source>
        <dbReference type="HAMAP-Rule" id="MF_00310"/>
    </source>
</evidence>
<accession>C3L1B0</accession>
<keyword id="KW-0066">ATP synthesis</keyword>
<keyword id="KW-0375">Hydrogen ion transport</keyword>
<keyword id="KW-0406">Ion transport</keyword>
<keyword id="KW-0813">Transport</keyword>
<dbReference type="EMBL" id="CP001083">
    <property type="protein sequence ID" value="ACQ51567.1"/>
    <property type="molecule type" value="Genomic_DNA"/>
</dbReference>
<dbReference type="RefSeq" id="WP_004441818.1">
    <property type="nucleotide sequence ID" value="NC_012658.1"/>
</dbReference>
<dbReference type="SMR" id="C3L1B0"/>
<dbReference type="KEGG" id="cbi:CLJ_B2854"/>
<dbReference type="HOGENOM" id="CLU_022916_0_0_9"/>
<dbReference type="Proteomes" id="UP000002333">
    <property type="component" value="Chromosome"/>
</dbReference>
<dbReference type="GO" id="GO:0005524">
    <property type="term" value="F:ATP binding"/>
    <property type="evidence" value="ECO:0007669"/>
    <property type="project" value="UniProtKB-UniRule"/>
</dbReference>
<dbReference type="GO" id="GO:0046933">
    <property type="term" value="F:proton-transporting ATP synthase activity, rotational mechanism"/>
    <property type="evidence" value="ECO:0007669"/>
    <property type="project" value="UniProtKB-UniRule"/>
</dbReference>
<dbReference type="GO" id="GO:0042777">
    <property type="term" value="P:proton motive force-driven plasma membrane ATP synthesis"/>
    <property type="evidence" value="ECO:0007669"/>
    <property type="project" value="UniProtKB-UniRule"/>
</dbReference>
<dbReference type="CDD" id="cd18112">
    <property type="entry name" value="ATP-synt_V_A-type_beta_C"/>
    <property type="match status" value="1"/>
</dbReference>
<dbReference type="CDD" id="cd18118">
    <property type="entry name" value="ATP-synt_V_A-type_beta_N"/>
    <property type="match status" value="1"/>
</dbReference>
<dbReference type="CDD" id="cd01135">
    <property type="entry name" value="V_A-ATPase_B"/>
    <property type="match status" value="1"/>
</dbReference>
<dbReference type="Gene3D" id="3.40.50.12240">
    <property type="match status" value="1"/>
</dbReference>
<dbReference type="HAMAP" id="MF_00310">
    <property type="entry name" value="ATP_synth_B_arch"/>
    <property type="match status" value="1"/>
</dbReference>
<dbReference type="InterPro" id="IPR055190">
    <property type="entry name" value="ATP-synt_VA_C"/>
</dbReference>
<dbReference type="InterPro" id="IPR020003">
    <property type="entry name" value="ATPase_a/bsu_AS"/>
</dbReference>
<dbReference type="InterPro" id="IPR004100">
    <property type="entry name" value="ATPase_F1/V1/A1_a/bsu_N"/>
</dbReference>
<dbReference type="InterPro" id="IPR000194">
    <property type="entry name" value="ATPase_F1/V1/A1_a/bsu_nucl-bd"/>
</dbReference>
<dbReference type="InterPro" id="IPR027417">
    <property type="entry name" value="P-loop_NTPase"/>
</dbReference>
<dbReference type="InterPro" id="IPR022879">
    <property type="entry name" value="V-ATPase_su_B/beta"/>
</dbReference>
<dbReference type="NCBIfam" id="NF003235">
    <property type="entry name" value="PRK04196.1"/>
    <property type="match status" value="1"/>
</dbReference>
<dbReference type="PANTHER" id="PTHR43389">
    <property type="entry name" value="V-TYPE PROTON ATPASE SUBUNIT B"/>
    <property type="match status" value="1"/>
</dbReference>
<dbReference type="PANTHER" id="PTHR43389:SF4">
    <property type="entry name" value="V-TYPE PROTON ATPASE SUBUNIT B"/>
    <property type="match status" value="1"/>
</dbReference>
<dbReference type="Pfam" id="PF00006">
    <property type="entry name" value="ATP-synt_ab"/>
    <property type="match status" value="1"/>
</dbReference>
<dbReference type="Pfam" id="PF02874">
    <property type="entry name" value="ATP-synt_ab_N"/>
    <property type="match status" value="1"/>
</dbReference>
<dbReference type="Pfam" id="PF22919">
    <property type="entry name" value="ATP-synt_VA_C"/>
    <property type="match status" value="1"/>
</dbReference>
<dbReference type="PIRSF" id="PIRSF039114">
    <property type="entry name" value="V-ATPsynth_beta/V-ATPase_B"/>
    <property type="match status" value="1"/>
</dbReference>
<dbReference type="SUPFAM" id="SSF47917">
    <property type="entry name" value="C-terminal domain of alpha and beta subunits of F1 ATP synthase"/>
    <property type="match status" value="1"/>
</dbReference>
<dbReference type="SUPFAM" id="SSF52540">
    <property type="entry name" value="P-loop containing nucleoside triphosphate hydrolases"/>
    <property type="match status" value="1"/>
</dbReference>
<dbReference type="PROSITE" id="PS00152">
    <property type="entry name" value="ATPASE_ALPHA_BETA"/>
    <property type="match status" value="1"/>
</dbReference>
<comment type="function">
    <text evidence="1">Produces ATP from ADP in the presence of a proton gradient across the membrane. The V-type beta chain is a regulatory subunit.</text>
</comment>
<comment type="similarity">
    <text evidence="1">Belongs to the ATPase alpha/beta chains family.</text>
</comment>
<feature type="chain" id="PRO_1000205040" description="V-type ATP synthase beta chain">
    <location>
        <begin position="1"/>
        <end position="461"/>
    </location>
</feature>
<protein>
    <recommendedName>
        <fullName evidence="1">V-type ATP synthase beta chain</fullName>
    </recommendedName>
    <alternativeName>
        <fullName evidence="1">V-ATPase subunit B</fullName>
    </alternativeName>
</protein>
<proteinExistence type="inferred from homology"/>
<reference key="1">
    <citation type="submission" date="2008-05" db="EMBL/GenBank/DDBJ databases">
        <title>Genome sequence of Clostridium botulinum Ba4 strain 657.</title>
        <authorList>
            <person name="Shrivastava S."/>
            <person name="Brown J.L."/>
            <person name="Bruce D."/>
            <person name="Detter C."/>
            <person name="Munk C."/>
            <person name="Smith L.A."/>
            <person name="Smith T.J."/>
            <person name="Sutton G."/>
            <person name="Brettin T.S."/>
        </authorList>
    </citation>
    <scope>NUCLEOTIDE SEQUENCE [LARGE SCALE GENOMIC DNA]</scope>
    <source>
        <strain>657 / Type Ba4</strain>
    </source>
</reference>
<name>VATB_CLOB6</name>